<gene>
    <name evidence="1" type="primary">recO</name>
    <name type="ordered locus">Mflv_2713</name>
</gene>
<keyword id="KW-0227">DNA damage</keyword>
<keyword id="KW-0233">DNA recombination</keyword>
<keyword id="KW-0234">DNA repair</keyword>
<protein>
    <recommendedName>
        <fullName evidence="1">DNA repair protein RecO</fullName>
    </recommendedName>
    <alternativeName>
        <fullName evidence="1">Recombination protein O</fullName>
    </alternativeName>
</protein>
<organism>
    <name type="scientific">Mycolicibacterium gilvum (strain PYR-GCK)</name>
    <name type="common">Mycobacterium gilvum (strain PYR-GCK)</name>
    <dbReference type="NCBI Taxonomy" id="350054"/>
    <lineage>
        <taxon>Bacteria</taxon>
        <taxon>Bacillati</taxon>
        <taxon>Actinomycetota</taxon>
        <taxon>Actinomycetes</taxon>
        <taxon>Mycobacteriales</taxon>
        <taxon>Mycobacteriaceae</taxon>
        <taxon>Mycolicibacterium</taxon>
    </lineage>
</organism>
<evidence type="ECO:0000255" key="1">
    <source>
        <dbReference type="HAMAP-Rule" id="MF_00201"/>
    </source>
</evidence>
<sequence>MRLYRDRAVVLRQHKLGEADRIVSLLTREHGLVRAVAKGVRRTRSKFGARLEPFAHIDVQLHPGRNLDIVTQVQAIDAFASDIVSDYGRYTCACAMLETAERIAGEERAPVPALHRLTVAALRAVADGTRPRELVLDAYLLRAMGVAGWAPALIECARCAAPGPHRAFHVAAGGSVCVHCRPSGSVTPPQGVLDLMAALYDGDWEHAQISTPAHRSQASGLVAAHLQWHLERQLRTLPLVERPGRAEVARNIRQDMAHGNQAEEQLPPAASGA</sequence>
<name>RECO_MYCGI</name>
<reference key="1">
    <citation type="submission" date="2007-04" db="EMBL/GenBank/DDBJ databases">
        <title>Complete sequence of chromosome of Mycobacterium gilvum PYR-GCK.</title>
        <authorList>
            <consortium name="US DOE Joint Genome Institute"/>
            <person name="Copeland A."/>
            <person name="Lucas S."/>
            <person name="Lapidus A."/>
            <person name="Barry K."/>
            <person name="Detter J.C."/>
            <person name="Glavina del Rio T."/>
            <person name="Hammon N."/>
            <person name="Israni S."/>
            <person name="Dalin E."/>
            <person name="Tice H."/>
            <person name="Pitluck S."/>
            <person name="Chain P."/>
            <person name="Malfatti S."/>
            <person name="Shin M."/>
            <person name="Vergez L."/>
            <person name="Schmutz J."/>
            <person name="Larimer F."/>
            <person name="Land M."/>
            <person name="Hauser L."/>
            <person name="Kyrpides N."/>
            <person name="Mikhailova N."/>
            <person name="Miller C."/>
            <person name="Richardson P."/>
        </authorList>
    </citation>
    <scope>NUCLEOTIDE SEQUENCE [LARGE SCALE GENOMIC DNA]</scope>
    <source>
        <strain>PYR-GCK</strain>
    </source>
</reference>
<proteinExistence type="inferred from homology"/>
<comment type="function">
    <text evidence="1">Involved in DNA repair and RecF pathway recombination.</text>
</comment>
<comment type="similarity">
    <text evidence="1">Belongs to the RecO family.</text>
</comment>
<dbReference type="EMBL" id="CP000656">
    <property type="protein sequence ID" value="ABP45190.1"/>
    <property type="molecule type" value="Genomic_DNA"/>
</dbReference>
<dbReference type="SMR" id="A4T2B7"/>
<dbReference type="STRING" id="350054.Mflv_2713"/>
<dbReference type="KEGG" id="mgi:Mflv_2713"/>
<dbReference type="eggNOG" id="COG1381">
    <property type="taxonomic scope" value="Bacteria"/>
</dbReference>
<dbReference type="HOGENOM" id="CLU_066632_1_1_11"/>
<dbReference type="OrthoDB" id="9812244at2"/>
<dbReference type="GO" id="GO:0043590">
    <property type="term" value="C:bacterial nucleoid"/>
    <property type="evidence" value="ECO:0007669"/>
    <property type="project" value="TreeGrafter"/>
</dbReference>
<dbReference type="GO" id="GO:0006310">
    <property type="term" value="P:DNA recombination"/>
    <property type="evidence" value="ECO:0007669"/>
    <property type="project" value="UniProtKB-UniRule"/>
</dbReference>
<dbReference type="GO" id="GO:0006302">
    <property type="term" value="P:double-strand break repair"/>
    <property type="evidence" value="ECO:0007669"/>
    <property type="project" value="TreeGrafter"/>
</dbReference>
<dbReference type="FunFam" id="2.40.50.140:FF:000176">
    <property type="entry name" value="DNA repair protein RecO"/>
    <property type="match status" value="1"/>
</dbReference>
<dbReference type="Gene3D" id="2.40.50.140">
    <property type="entry name" value="Nucleic acid-binding proteins"/>
    <property type="match status" value="1"/>
</dbReference>
<dbReference type="Gene3D" id="1.20.1440.120">
    <property type="entry name" value="Recombination protein O, C-terminal domain"/>
    <property type="match status" value="1"/>
</dbReference>
<dbReference type="HAMAP" id="MF_00201">
    <property type="entry name" value="RecO"/>
    <property type="match status" value="1"/>
</dbReference>
<dbReference type="InterPro" id="IPR037278">
    <property type="entry name" value="ARFGAP/RecO"/>
</dbReference>
<dbReference type="InterPro" id="IPR022572">
    <property type="entry name" value="DNA_rep/recomb_RecO_N"/>
</dbReference>
<dbReference type="InterPro" id="IPR012340">
    <property type="entry name" value="NA-bd_OB-fold"/>
</dbReference>
<dbReference type="InterPro" id="IPR003717">
    <property type="entry name" value="RecO"/>
</dbReference>
<dbReference type="InterPro" id="IPR042242">
    <property type="entry name" value="RecO_C"/>
</dbReference>
<dbReference type="NCBIfam" id="TIGR00613">
    <property type="entry name" value="reco"/>
    <property type="match status" value="1"/>
</dbReference>
<dbReference type="PANTHER" id="PTHR33991">
    <property type="entry name" value="DNA REPAIR PROTEIN RECO"/>
    <property type="match status" value="1"/>
</dbReference>
<dbReference type="PANTHER" id="PTHR33991:SF1">
    <property type="entry name" value="DNA REPAIR PROTEIN RECO"/>
    <property type="match status" value="1"/>
</dbReference>
<dbReference type="Pfam" id="PF02565">
    <property type="entry name" value="RecO_C"/>
    <property type="match status" value="1"/>
</dbReference>
<dbReference type="Pfam" id="PF11967">
    <property type="entry name" value="RecO_N"/>
    <property type="match status" value="1"/>
</dbReference>
<dbReference type="SUPFAM" id="SSF57863">
    <property type="entry name" value="ArfGap/RecO-like zinc finger"/>
    <property type="match status" value="1"/>
</dbReference>
<dbReference type="SUPFAM" id="SSF50249">
    <property type="entry name" value="Nucleic acid-binding proteins"/>
    <property type="match status" value="1"/>
</dbReference>
<feature type="chain" id="PRO_1000077733" description="DNA repair protein RecO">
    <location>
        <begin position="1"/>
        <end position="273"/>
    </location>
</feature>
<accession>A4T2B7</accession>